<evidence type="ECO:0000255" key="1">
    <source>
        <dbReference type="HAMAP-Rule" id="MF_00060"/>
    </source>
</evidence>
<protein>
    <recommendedName>
        <fullName evidence="1">5'-nucleotidase SurE</fullName>
        <ecNumber evidence="1">3.1.3.5</ecNumber>
    </recommendedName>
    <alternativeName>
        <fullName evidence="1">Nucleoside 5'-monophosphate phosphohydrolase</fullName>
    </alternativeName>
</protein>
<gene>
    <name evidence="1" type="primary">surE</name>
    <name type="ordered locus">gll0444</name>
</gene>
<dbReference type="EC" id="3.1.3.5" evidence="1"/>
<dbReference type="EMBL" id="BA000045">
    <property type="protein sequence ID" value="BAC88385.1"/>
    <property type="molecule type" value="Genomic_DNA"/>
</dbReference>
<dbReference type="RefSeq" id="NP_923390.1">
    <property type="nucleotide sequence ID" value="NC_005125.1"/>
</dbReference>
<dbReference type="RefSeq" id="WP_011140447.1">
    <property type="nucleotide sequence ID" value="NC_005125.1"/>
</dbReference>
<dbReference type="SMR" id="Q7NNG7"/>
<dbReference type="STRING" id="251221.gene:10757916"/>
<dbReference type="EnsemblBacteria" id="BAC88385">
    <property type="protein sequence ID" value="BAC88385"/>
    <property type="gene ID" value="BAC88385"/>
</dbReference>
<dbReference type="KEGG" id="gvi:gll0444"/>
<dbReference type="PATRIC" id="fig|251221.4.peg.452"/>
<dbReference type="eggNOG" id="COG0496">
    <property type="taxonomic scope" value="Bacteria"/>
</dbReference>
<dbReference type="HOGENOM" id="CLU_045192_1_3_3"/>
<dbReference type="InParanoid" id="Q7NNG7"/>
<dbReference type="OrthoDB" id="9780815at2"/>
<dbReference type="PhylomeDB" id="Q7NNG7"/>
<dbReference type="Proteomes" id="UP000000557">
    <property type="component" value="Chromosome"/>
</dbReference>
<dbReference type="GO" id="GO:0005737">
    <property type="term" value="C:cytoplasm"/>
    <property type="evidence" value="ECO:0007669"/>
    <property type="project" value="UniProtKB-SubCell"/>
</dbReference>
<dbReference type="GO" id="GO:0008254">
    <property type="term" value="F:3'-nucleotidase activity"/>
    <property type="evidence" value="ECO:0000318"/>
    <property type="project" value="GO_Central"/>
</dbReference>
<dbReference type="GO" id="GO:0008253">
    <property type="term" value="F:5'-nucleotidase activity"/>
    <property type="evidence" value="ECO:0000318"/>
    <property type="project" value="GO_Central"/>
</dbReference>
<dbReference type="GO" id="GO:0004309">
    <property type="term" value="F:exopolyphosphatase activity"/>
    <property type="evidence" value="ECO:0000318"/>
    <property type="project" value="GO_Central"/>
</dbReference>
<dbReference type="GO" id="GO:0046872">
    <property type="term" value="F:metal ion binding"/>
    <property type="evidence" value="ECO:0007669"/>
    <property type="project" value="UniProtKB-UniRule"/>
</dbReference>
<dbReference type="GO" id="GO:0000166">
    <property type="term" value="F:nucleotide binding"/>
    <property type="evidence" value="ECO:0007669"/>
    <property type="project" value="UniProtKB-KW"/>
</dbReference>
<dbReference type="FunFam" id="3.40.1210.10:FF:000001">
    <property type="entry name" value="5'/3'-nucleotidase SurE"/>
    <property type="match status" value="1"/>
</dbReference>
<dbReference type="Gene3D" id="3.40.1210.10">
    <property type="entry name" value="Survival protein SurE-like phosphatase/nucleotidase"/>
    <property type="match status" value="1"/>
</dbReference>
<dbReference type="HAMAP" id="MF_00060">
    <property type="entry name" value="SurE"/>
    <property type="match status" value="1"/>
</dbReference>
<dbReference type="InterPro" id="IPR030048">
    <property type="entry name" value="SurE"/>
</dbReference>
<dbReference type="InterPro" id="IPR002828">
    <property type="entry name" value="SurE-like_Pase/nucleotidase"/>
</dbReference>
<dbReference type="InterPro" id="IPR036523">
    <property type="entry name" value="SurE-like_sf"/>
</dbReference>
<dbReference type="NCBIfam" id="NF001490">
    <property type="entry name" value="PRK00346.1-4"/>
    <property type="match status" value="1"/>
</dbReference>
<dbReference type="NCBIfam" id="NF001492">
    <property type="entry name" value="PRK00346.2-2"/>
    <property type="match status" value="1"/>
</dbReference>
<dbReference type="NCBIfam" id="TIGR00087">
    <property type="entry name" value="surE"/>
    <property type="match status" value="1"/>
</dbReference>
<dbReference type="PANTHER" id="PTHR30457">
    <property type="entry name" value="5'-NUCLEOTIDASE SURE"/>
    <property type="match status" value="1"/>
</dbReference>
<dbReference type="PANTHER" id="PTHR30457:SF12">
    <property type="entry name" value="5'_3'-NUCLEOTIDASE SURE"/>
    <property type="match status" value="1"/>
</dbReference>
<dbReference type="Pfam" id="PF01975">
    <property type="entry name" value="SurE"/>
    <property type="match status" value="1"/>
</dbReference>
<dbReference type="SUPFAM" id="SSF64167">
    <property type="entry name" value="SurE-like"/>
    <property type="match status" value="1"/>
</dbReference>
<keyword id="KW-0963">Cytoplasm</keyword>
<keyword id="KW-0378">Hydrolase</keyword>
<keyword id="KW-0479">Metal-binding</keyword>
<keyword id="KW-0547">Nucleotide-binding</keyword>
<keyword id="KW-1185">Reference proteome</keyword>
<accession>Q7NNG7</accession>
<reference key="1">
    <citation type="journal article" date="2003" name="DNA Res.">
        <title>Complete genome structure of Gloeobacter violaceus PCC 7421, a cyanobacterium that lacks thylakoids.</title>
        <authorList>
            <person name="Nakamura Y."/>
            <person name="Kaneko T."/>
            <person name="Sato S."/>
            <person name="Mimuro M."/>
            <person name="Miyashita H."/>
            <person name="Tsuchiya T."/>
            <person name="Sasamoto S."/>
            <person name="Watanabe A."/>
            <person name="Kawashima K."/>
            <person name="Kishida Y."/>
            <person name="Kiyokawa C."/>
            <person name="Kohara M."/>
            <person name="Matsumoto M."/>
            <person name="Matsuno A."/>
            <person name="Nakazaki N."/>
            <person name="Shimpo S."/>
            <person name="Takeuchi C."/>
            <person name="Yamada M."/>
            <person name="Tabata S."/>
        </authorList>
    </citation>
    <scope>NUCLEOTIDE SEQUENCE [LARGE SCALE GENOMIC DNA]</scope>
    <source>
        <strain>ATCC 29082 / PCC 7421</strain>
    </source>
</reference>
<feature type="chain" id="PRO_0000111812" description="5'-nucleotidase SurE">
    <location>
        <begin position="1"/>
        <end position="263"/>
    </location>
</feature>
<feature type="binding site" evidence="1">
    <location>
        <position position="8"/>
    </location>
    <ligand>
        <name>a divalent metal cation</name>
        <dbReference type="ChEBI" id="CHEBI:60240"/>
    </ligand>
</feature>
<feature type="binding site" evidence="1">
    <location>
        <position position="9"/>
    </location>
    <ligand>
        <name>a divalent metal cation</name>
        <dbReference type="ChEBI" id="CHEBI:60240"/>
    </ligand>
</feature>
<feature type="binding site" evidence="1">
    <location>
        <position position="40"/>
    </location>
    <ligand>
        <name>a divalent metal cation</name>
        <dbReference type="ChEBI" id="CHEBI:60240"/>
    </ligand>
</feature>
<feature type="binding site" evidence="1">
    <location>
        <position position="98"/>
    </location>
    <ligand>
        <name>a divalent metal cation</name>
        <dbReference type="ChEBI" id="CHEBI:60240"/>
    </ligand>
</feature>
<sequence>MRILVSNDDGILAQGIRTLANTLHRAGHTVTVVCPDRERSATGHALTMHKPLRAEAVENLFEPGLAAWAINGTPSDSVKLGLDALLGERPDLVVSGINCGANLGSDVLYSGTVSAAMEGTIEGLPSIAVSLASRVRCDFQPAADFLVRFVRALEVQPLPEAFLLNVNVPALPESEILGARVCRLGMRRYRDQFVKRVDPRGVNYYWLAGEVIESEEAPDSDVVAVGEGCIAITPLKYDLTYEPGIGLLGARQWEKIFDPLAGG</sequence>
<name>SURE_GLOVI</name>
<organism>
    <name type="scientific">Gloeobacter violaceus (strain ATCC 29082 / PCC 7421)</name>
    <dbReference type="NCBI Taxonomy" id="251221"/>
    <lineage>
        <taxon>Bacteria</taxon>
        <taxon>Bacillati</taxon>
        <taxon>Cyanobacteriota</taxon>
        <taxon>Cyanophyceae</taxon>
        <taxon>Gloeobacterales</taxon>
        <taxon>Gloeobacteraceae</taxon>
        <taxon>Gloeobacter</taxon>
    </lineage>
</organism>
<proteinExistence type="inferred from homology"/>
<comment type="function">
    <text evidence="1">Nucleotidase that shows phosphatase activity on nucleoside 5'-monophosphates.</text>
</comment>
<comment type="catalytic activity">
    <reaction evidence="1">
        <text>a ribonucleoside 5'-phosphate + H2O = a ribonucleoside + phosphate</text>
        <dbReference type="Rhea" id="RHEA:12484"/>
        <dbReference type="ChEBI" id="CHEBI:15377"/>
        <dbReference type="ChEBI" id="CHEBI:18254"/>
        <dbReference type="ChEBI" id="CHEBI:43474"/>
        <dbReference type="ChEBI" id="CHEBI:58043"/>
        <dbReference type="EC" id="3.1.3.5"/>
    </reaction>
</comment>
<comment type="cofactor">
    <cofactor evidence="1">
        <name>a divalent metal cation</name>
        <dbReference type="ChEBI" id="CHEBI:60240"/>
    </cofactor>
    <text evidence="1">Binds 1 divalent metal cation per subunit.</text>
</comment>
<comment type="subcellular location">
    <subcellularLocation>
        <location evidence="1">Cytoplasm</location>
    </subcellularLocation>
</comment>
<comment type="similarity">
    <text evidence="1">Belongs to the SurE nucleotidase family.</text>
</comment>